<evidence type="ECO:0000255" key="1">
    <source>
        <dbReference type="HAMAP-Rule" id="MF_00010"/>
    </source>
</evidence>
<accession>B7JWT1</accession>
<name>Y1733_RIPO1</name>
<dbReference type="EMBL" id="CP001287">
    <property type="protein sequence ID" value="ACK65780.1"/>
    <property type="molecule type" value="Genomic_DNA"/>
</dbReference>
<dbReference type="RefSeq" id="WP_012595053.1">
    <property type="nucleotide sequence ID" value="NC_011726.1"/>
</dbReference>
<dbReference type="STRING" id="41431.PCC8801_1733"/>
<dbReference type="KEGG" id="cyp:PCC8801_1733"/>
<dbReference type="eggNOG" id="COG1742">
    <property type="taxonomic scope" value="Bacteria"/>
</dbReference>
<dbReference type="HOGENOM" id="CLU_117653_2_0_3"/>
<dbReference type="OrthoDB" id="123240at2"/>
<dbReference type="Proteomes" id="UP000008204">
    <property type="component" value="Chromosome"/>
</dbReference>
<dbReference type="GO" id="GO:0005886">
    <property type="term" value="C:plasma membrane"/>
    <property type="evidence" value="ECO:0007669"/>
    <property type="project" value="UniProtKB-SubCell"/>
</dbReference>
<dbReference type="HAMAP" id="MF_00010">
    <property type="entry name" value="UPF0060"/>
    <property type="match status" value="1"/>
</dbReference>
<dbReference type="InterPro" id="IPR003844">
    <property type="entry name" value="UPF0060"/>
</dbReference>
<dbReference type="NCBIfam" id="NF002586">
    <property type="entry name" value="PRK02237.1"/>
    <property type="match status" value="1"/>
</dbReference>
<dbReference type="PANTHER" id="PTHR36116">
    <property type="entry name" value="UPF0060 MEMBRANE PROTEIN YNFA"/>
    <property type="match status" value="1"/>
</dbReference>
<dbReference type="PANTHER" id="PTHR36116:SF1">
    <property type="entry name" value="UPF0060 MEMBRANE PROTEIN YNFA"/>
    <property type="match status" value="1"/>
</dbReference>
<dbReference type="Pfam" id="PF02694">
    <property type="entry name" value="UPF0060"/>
    <property type="match status" value="1"/>
</dbReference>
<dbReference type="SUPFAM" id="SSF103481">
    <property type="entry name" value="Multidrug resistance efflux transporter EmrE"/>
    <property type="match status" value="1"/>
</dbReference>
<keyword id="KW-0997">Cell inner membrane</keyword>
<keyword id="KW-1003">Cell membrane</keyword>
<keyword id="KW-0472">Membrane</keyword>
<keyword id="KW-1185">Reference proteome</keyword>
<keyword id="KW-0812">Transmembrane</keyword>
<keyword id="KW-1133">Transmembrane helix</keyword>
<proteinExistence type="inferred from homology"/>
<reference key="1">
    <citation type="journal article" date="2011" name="MBio">
        <title>Novel metabolic attributes of the genus Cyanothece, comprising a group of unicellular nitrogen-fixing Cyanobacteria.</title>
        <authorList>
            <person name="Bandyopadhyay A."/>
            <person name="Elvitigala T."/>
            <person name="Welsh E."/>
            <person name="Stockel J."/>
            <person name="Liberton M."/>
            <person name="Min H."/>
            <person name="Sherman L.A."/>
            <person name="Pakrasi H.B."/>
        </authorList>
    </citation>
    <scope>NUCLEOTIDE SEQUENCE [LARGE SCALE GENOMIC DNA]</scope>
    <source>
        <strain>PCC 8801 / RF-1</strain>
    </source>
</reference>
<protein>
    <recommendedName>
        <fullName evidence="1">UPF0060 membrane protein PCC8801_1733</fullName>
    </recommendedName>
</protein>
<sequence length="109" mass="12340">MNIFRSLLYFFFTGLCEIGGGYLVWLWLKEGKSIKYALLGWGLLMLYGVLPALQTANFGRVYSAYGGAFVIFSLLWGWKVDRIPPDSYDWLGTLIILIGASVIMYAPRN</sequence>
<feature type="chain" id="PRO_1000197484" description="UPF0060 membrane protein PCC8801_1733">
    <location>
        <begin position="1"/>
        <end position="109"/>
    </location>
</feature>
<feature type="transmembrane region" description="Helical" evidence="1">
    <location>
        <begin position="7"/>
        <end position="27"/>
    </location>
</feature>
<feature type="transmembrane region" description="Helical" evidence="1">
    <location>
        <begin position="36"/>
        <end position="56"/>
    </location>
</feature>
<feature type="transmembrane region" description="Helical" evidence="1">
    <location>
        <begin position="58"/>
        <end position="78"/>
    </location>
</feature>
<feature type="transmembrane region" description="Helical" evidence="1">
    <location>
        <begin position="87"/>
        <end position="107"/>
    </location>
</feature>
<comment type="subcellular location">
    <subcellularLocation>
        <location evidence="1">Cell inner membrane</location>
        <topology evidence="1">Multi-pass membrane protein</topology>
    </subcellularLocation>
</comment>
<comment type="similarity">
    <text evidence="1">Belongs to the UPF0060 family.</text>
</comment>
<gene>
    <name type="ordered locus">PCC8801_1733</name>
</gene>
<organism>
    <name type="scientific">Rippkaea orientalis (strain PCC 8801 / RF-1)</name>
    <name type="common">Cyanothece sp. (strain PCC 8801)</name>
    <dbReference type="NCBI Taxonomy" id="41431"/>
    <lineage>
        <taxon>Bacteria</taxon>
        <taxon>Bacillati</taxon>
        <taxon>Cyanobacteriota</taxon>
        <taxon>Cyanophyceae</taxon>
        <taxon>Oscillatoriophycideae</taxon>
        <taxon>Chroococcales</taxon>
        <taxon>Aphanothecaceae</taxon>
        <taxon>Rippkaea</taxon>
        <taxon>Rippkaea orientalis</taxon>
    </lineage>
</organism>